<comment type="function">
    <text evidence="2">The carboxylated form is one of the main organic components of the bone matrix, which constitutes 1-2% of the total bone protein (By similarity). The carboxylated form binds strongly to apatite and calcium (By similarity).</text>
</comment>
<comment type="subcellular location">
    <subcellularLocation>
        <location evidence="5">Secreted</location>
    </subcellularLocation>
</comment>
<comment type="PTM">
    <text evidence="4 5">Gamma-carboxyglutamate residues are formed by vitamin K dependent carboxylation by GGCX. These residues are essential for the binding of calcium.</text>
</comment>
<comment type="similarity">
    <text evidence="6">Belongs to the osteocalcin/matrix Gla protein family.</text>
</comment>
<reference key="1">
    <citation type="journal article" date="2001" name="Gene">
        <title>Cloning of the bone Gla protein gene from the teleost fish Sparus aurata. Evidence for overall conservation in gene organization and bone-specific expression from fish to man.</title>
        <authorList>
            <person name="Pinto J.P."/>
            <person name="Ohresser M.C.P."/>
            <person name="Cancela M.L."/>
        </authorList>
    </citation>
    <scope>NUCLEOTIDE SEQUENCE [GENOMIC DNA / MRNA]</scope>
</reference>
<reference key="2">
    <citation type="journal article" date="1995" name="Int. J. Pept. Protein Res.">
        <title>Amino-acid sequence of bone Gla protein from the African clawed toad Xenopus laevis and the fish Sparus aurata.</title>
        <authorList>
            <person name="Cancela M.L."/>
            <person name="Williamson M.K."/>
            <person name="Price P.A."/>
        </authorList>
    </citation>
    <scope>PROTEIN SEQUENCE OF 53-97</scope>
    <scope>SUBCELLULAR LOCATION</scope>
    <scope>GAMMA-CARBOXYGLUTAMATION AT GLU-63; GLU-67 AND GLU-70</scope>
</reference>
<organism>
    <name type="scientific">Sparus aurata</name>
    <name type="common">Gilthead sea bream</name>
    <dbReference type="NCBI Taxonomy" id="8175"/>
    <lineage>
        <taxon>Eukaryota</taxon>
        <taxon>Metazoa</taxon>
        <taxon>Chordata</taxon>
        <taxon>Craniata</taxon>
        <taxon>Vertebrata</taxon>
        <taxon>Euteleostomi</taxon>
        <taxon>Actinopterygii</taxon>
        <taxon>Neopterygii</taxon>
        <taxon>Teleostei</taxon>
        <taxon>Neoteleostei</taxon>
        <taxon>Acanthomorphata</taxon>
        <taxon>Eupercaria</taxon>
        <taxon>Spariformes</taxon>
        <taxon>Sparidae</taxon>
        <taxon>Sparus</taxon>
    </lineage>
</organism>
<name>OSTCN_SPAAU</name>
<sequence>MKTLAFLVLCSLAAICLTSDASTGSQPASDNPADEGMFVERDQASAVVRQKRAAGQLSLTQLESLREVCELNLACEHMMDTEGIIAAYTAYYGPIPY</sequence>
<proteinExistence type="evidence at protein level"/>
<dbReference type="EMBL" id="AF048703">
    <property type="protein sequence ID" value="AAK66568.1"/>
    <property type="molecule type" value="mRNA"/>
</dbReference>
<dbReference type="EMBL" id="AF289506">
    <property type="protein sequence ID" value="AAK62679.1"/>
    <property type="molecule type" value="Genomic_DNA"/>
</dbReference>
<dbReference type="RefSeq" id="XP_030264301.1">
    <property type="nucleotide sequence ID" value="XM_030408441.1"/>
</dbReference>
<dbReference type="SMR" id="P40148"/>
<dbReference type="Ensembl" id="ENSSAUT00010015051.1">
    <property type="protein sequence ID" value="ENSSAUP00010014176.1"/>
    <property type="gene ID" value="ENSSAUG00010006659.1"/>
</dbReference>
<dbReference type="GeneID" id="115575986"/>
<dbReference type="GeneTree" id="ENSGT00710000107036"/>
<dbReference type="InParanoid" id="P40148"/>
<dbReference type="OMA" id="MDTEGII"/>
<dbReference type="OrthoDB" id="9950568at2759"/>
<dbReference type="Proteomes" id="UP000472265">
    <property type="component" value="Chromosome 23"/>
</dbReference>
<dbReference type="GO" id="GO:0005576">
    <property type="term" value="C:extracellular region"/>
    <property type="evidence" value="ECO:0007669"/>
    <property type="project" value="UniProtKB-SubCell"/>
</dbReference>
<dbReference type="GO" id="GO:0005509">
    <property type="term" value="F:calcium ion binding"/>
    <property type="evidence" value="ECO:0007669"/>
    <property type="project" value="InterPro"/>
</dbReference>
<dbReference type="GO" id="GO:0005179">
    <property type="term" value="F:hormone activity"/>
    <property type="evidence" value="ECO:0000250"/>
    <property type="project" value="UniProtKB"/>
</dbReference>
<dbReference type="GO" id="GO:0046848">
    <property type="term" value="F:hydroxyapatite binding"/>
    <property type="evidence" value="ECO:0007669"/>
    <property type="project" value="TreeGrafter"/>
</dbReference>
<dbReference type="GO" id="GO:0008147">
    <property type="term" value="F:structural constituent of bone"/>
    <property type="evidence" value="ECO:0000250"/>
    <property type="project" value="UniProtKB"/>
</dbReference>
<dbReference type="GO" id="GO:0031214">
    <property type="term" value="P:biomineral tissue development"/>
    <property type="evidence" value="ECO:0007669"/>
    <property type="project" value="UniProtKB-KW"/>
</dbReference>
<dbReference type="GO" id="GO:0060348">
    <property type="term" value="P:bone development"/>
    <property type="evidence" value="ECO:0007669"/>
    <property type="project" value="InterPro"/>
</dbReference>
<dbReference type="GO" id="GO:0032869">
    <property type="term" value="P:cellular response to insulin stimulus"/>
    <property type="evidence" value="ECO:0000250"/>
    <property type="project" value="UniProtKB"/>
</dbReference>
<dbReference type="GO" id="GO:0042593">
    <property type="term" value="P:glucose homeostasis"/>
    <property type="evidence" value="ECO:0000250"/>
    <property type="project" value="UniProtKB"/>
</dbReference>
<dbReference type="GO" id="GO:1903011">
    <property type="term" value="P:negative regulation of bone development"/>
    <property type="evidence" value="ECO:0000250"/>
    <property type="project" value="UniProtKB"/>
</dbReference>
<dbReference type="GO" id="GO:0001649">
    <property type="term" value="P:osteoblast differentiation"/>
    <property type="evidence" value="ECO:0007669"/>
    <property type="project" value="TreeGrafter"/>
</dbReference>
<dbReference type="GO" id="GO:1900076">
    <property type="term" value="P:regulation of cellular response to insulin stimulus"/>
    <property type="evidence" value="ECO:0007669"/>
    <property type="project" value="InterPro"/>
</dbReference>
<dbReference type="GO" id="GO:0032571">
    <property type="term" value="P:response to vitamin K"/>
    <property type="evidence" value="ECO:0007669"/>
    <property type="project" value="InterPro"/>
</dbReference>
<dbReference type="GO" id="GO:0044342">
    <property type="term" value="P:type B pancreatic cell proliferation"/>
    <property type="evidence" value="ECO:0000250"/>
    <property type="project" value="UniProtKB"/>
</dbReference>
<dbReference type="InterPro" id="IPR035972">
    <property type="entry name" value="GLA-like_dom_SF"/>
</dbReference>
<dbReference type="InterPro" id="IPR000294">
    <property type="entry name" value="GLA_domain"/>
</dbReference>
<dbReference type="InterPro" id="IPR039176">
    <property type="entry name" value="Osteocalcin"/>
</dbReference>
<dbReference type="PANTHER" id="PTHR14235">
    <property type="entry name" value="OSTEOCALCIN"/>
    <property type="match status" value="1"/>
</dbReference>
<dbReference type="PANTHER" id="PTHR14235:SF0">
    <property type="entry name" value="OSTEOCALCIN"/>
    <property type="match status" value="1"/>
</dbReference>
<dbReference type="SMART" id="SM00069">
    <property type="entry name" value="GLA"/>
    <property type="match status" value="1"/>
</dbReference>
<dbReference type="SUPFAM" id="SSF57630">
    <property type="entry name" value="GLA-domain"/>
    <property type="match status" value="1"/>
</dbReference>
<dbReference type="PROSITE" id="PS00011">
    <property type="entry name" value="GLA_1"/>
    <property type="match status" value="1"/>
</dbReference>
<dbReference type="PROSITE" id="PS50998">
    <property type="entry name" value="GLA_2"/>
    <property type="match status" value="1"/>
</dbReference>
<keyword id="KW-0091">Biomineralization</keyword>
<keyword id="KW-0106">Calcium</keyword>
<keyword id="KW-0165">Cleavage on pair of basic residues</keyword>
<keyword id="KW-0903">Direct protein sequencing</keyword>
<keyword id="KW-1015">Disulfide bond</keyword>
<keyword id="KW-0301">Gamma-carboxyglutamic acid</keyword>
<keyword id="KW-0372">Hormone</keyword>
<keyword id="KW-0479">Metal-binding</keyword>
<keyword id="KW-1185">Reference proteome</keyword>
<keyword id="KW-0964">Secreted</keyword>
<keyword id="KW-0732">Signal</keyword>
<accession>P40148</accession>
<accession>Q90VW2</accession>
<protein>
    <recommendedName>
        <fullName>Osteocalcin</fullName>
    </recommendedName>
    <alternativeName>
        <fullName>Bone Gla protein</fullName>
        <shortName>BGP</shortName>
    </alternativeName>
    <alternativeName>
        <fullName>Gamma-carboxyglutamic acid-containing protein</fullName>
    </alternativeName>
</protein>
<evidence type="ECO:0000250" key="1">
    <source>
        <dbReference type="UniProtKB" id="P02820"/>
    </source>
</evidence>
<evidence type="ECO:0000250" key="2">
    <source>
        <dbReference type="UniProtKB" id="P86546"/>
    </source>
</evidence>
<evidence type="ECO:0000255" key="3"/>
<evidence type="ECO:0000255" key="4">
    <source>
        <dbReference type="PROSITE-ProRule" id="PRU00463"/>
    </source>
</evidence>
<evidence type="ECO:0000269" key="5">
    <source>
    </source>
</evidence>
<evidence type="ECO:0000305" key="6"/>
<gene>
    <name type="primary">bglap</name>
</gene>
<feature type="signal peptide" evidence="3">
    <location>
        <begin position="1"/>
        <end position="18"/>
    </location>
</feature>
<feature type="propeptide" id="PRO_0000011098" evidence="5">
    <location>
        <begin position="19"/>
        <end position="52"/>
    </location>
</feature>
<feature type="chain" id="PRO_0000011099" description="Osteocalcin">
    <location>
        <begin position="53"/>
        <end position="97"/>
    </location>
</feature>
<feature type="domain" description="Gla" evidence="4">
    <location>
        <begin position="53"/>
        <end position="93"/>
    </location>
</feature>
<feature type="binding site" evidence="1">
    <location>
        <position position="63"/>
    </location>
    <ligand>
        <name>Ca(2+)</name>
        <dbReference type="ChEBI" id="CHEBI:29108"/>
        <label>1</label>
    </ligand>
</feature>
<feature type="binding site" evidence="1">
    <location>
        <position position="67"/>
    </location>
    <ligand>
        <name>Ca(2+)</name>
        <dbReference type="ChEBI" id="CHEBI:29108"/>
        <label>2</label>
    </ligand>
</feature>
<feature type="binding site" evidence="1">
    <location>
        <position position="70"/>
    </location>
    <ligand>
        <name>Ca(2+)</name>
        <dbReference type="ChEBI" id="CHEBI:29108"/>
        <label>2</label>
    </ligand>
</feature>
<feature type="binding site" evidence="1">
    <location>
        <position position="70"/>
    </location>
    <ligand>
        <name>Ca(2+)</name>
        <dbReference type="ChEBI" id="CHEBI:29108"/>
        <label>3</label>
    </ligand>
</feature>
<feature type="binding site" evidence="1">
    <location>
        <position position="76"/>
    </location>
    <ligand>
        <name>Ca(2+)</name>
        <dbReference type="ChEBI" id="CHEBI:29108"/>
        <label>3</label>
    </ligand>
</feature>
<feature type="modified residue" description="4-carboxyglutamate" evidence="4 5">
    <location>
        <position position="63"/>
    </location>
</feature>
<feature type="modified residue" description="4-carboxyglutamate" evidence="4 5">
    <location>
        <position position="67"/>
    </location>
</feature>
<feature type="modified residue" description="4-carboxyglutamate" evidence="4 5">
    <location>
        <position position="70"/>
    </location>
</feature>
<feature type="disulfide bond" evidence="4">
    <location>
        <begin position="69"/>
        <end position="75"/>
    </location>
</feature>